<gene>
    <name evidence="1" type="primary">argG</name>
    <name type="ordered locus">ckrop_0842</name>
</gene>
<proteinExistence type="inferred from homology"/>
<keyword id="KW-0028">Amino-acid biosynthesis</keyword>
<keyword id="KW-0055">Arginine biosynthesis</keyword>
<keyword id="KW-0067">ATP-binding</keyword>
<keyword id="KW-0963">Cytoplasm</keyword>
<keyword id="KW-0436">Ligase</keyword>
<keyword id="KW-0547">Nucleotide-binding</keyword>
<keyword id="KW-1185">Reference proteome</keyword>
<organism>
    <name type="scientific">Corynebacterium kroppenstedtii (strain DSM 44385 / JCM 11950 / CIP 105744 / CCUG 35717)</name>
    <dbReference type="NCBI Taxonomy" id="645127"/>
    <lineage>
        <taxon>Bacteria</taxon>
        <taxon>Bacillati</taxon>
        <taxon>Actinomycetota</taxon>
        <taxon>Actinomycetes</taxon>
        <taxon>Mycobacteriales</taxon>
        <taxon>Corynebacteriaceae</taxon>
        <taxon>Corynebacterium</taxon>
    </lineage>
</organism>
<feature type="chain" id="PRO_1000201677" description="Argininosuccinate synthase">
    <location>
        <begin position="1"/>
        <end position="398"/>
    </location>
</feature>
<feature type="binding site" evidence="1">
    <location>
        <begin position="8"/>
        <end position="16"/>
    </location>
    <ligand>
        <name>ATP</name>
        <dbReference type="ChEBI" id="CHEBI:30616"/>
    </ligand>
</feature>
<feature type="binding site" evidence="1">
    <location>
        <position position="87"/>
    </location>
    <ligand>
        <name>L-citrulline</name>
        <dbReference type="ChEBI" id="CHEBI:57743"/>
    </ligand>
</feature>
<feature type="binding site" evidence="1">
    <location>
        <position position="117"/>
    </location>
    <ligand>
        <name>ATP</name>
        <dbReference type="ChEBI" id="CHEBI:30616"/>
    </ligand>
</feature>
<feature type="binding site" evidence="1">
    <location>
        <position position="119"/>
    </location>
    <ligand>
        <name>L-aspartate</name>
        <dbReference type="ChEBI" id="CHEBI:29991"/>
    </ligand>
</feature>
<feature type="binding site" evidence="1">
    <location>
        <position position="123"/>
    </location>
    <ligand>
        <name>L-aspartate</name>
        <dbReference type="ChEBI" id="CHEBI:29991"/>
    </ligand>
</feature>
<feature type="binding site" evidence="1">
    <location>
        <position position="123"/>
    </location>
    <ligand>
        <name>L-citrulline</name>
        <dbReference type="ChEBI" id="CHEBI:57743"/>
    </ligand>
</feature>
<feature type="binding site" evidence="1">
    <location>
        <position position="124"/>
    </location>
    <ligand>
        <name>L-aspartate</name>
        <dbReference type="ChEBI" id="CHEBI:29991"/>
    </ligand>
</feature>
<feature type="binding site" evidence="1">
    <location>
        <position position="127"/>
    </location>
    <ligand>
        <name>L-citrulline</name>
        <dbReference type="ChEBI" id="CHEBI:57743"/>
    </ligand>
</feature>
<feature type="binding site" evidence="1">
    <location>
        <position position="175"/>
    </location>
    <ligand>
        <name>L-citrulline</name>
        <dbReference type="ChEBI" id="CHEBI:57743"/>
    </ligand>
</feature>
<feature type="binding site" evidence="1">
    <location>
        <position position="259"/>
    </location>
    <ligand>
        <name>L-citrulline</name>
        <dbReference type="ChEBI" id="CHEBI:57743"/>
    </ligand>
</feature>
<feature type="binding site" evidence="1">
    <location>
        <position position="271"/>
    </location>
    <ligand>
        <name>L-citrulline</name>
        <dbReference type="ChEBI" id="CHEBI:57743"/>
    </ligand>
</feature>
<comment type="catalytic activity">
    <reaction evidence="1">
        <text>L-citrulline + L-aspartate + ATP = 2-(N(omega)-L-arginino)succinate + AMP + diphosphate + H(+)</text>
        <dbReference type="Rhea" id="RHEA:10932"/>
        <dbReference type="ChEBI" id="CHEBI:15378"/>
        <dbReference type="ChEBI" id="CHEBI:29991"/>
        <dbReference type="ChEBI" id="CHEBI:30616"/>
        <dbReference type="ChEBI" id="CHEBI:33019"/>
        <dbReference type="ChEBI" id="CHEBI:57472"/>
        <dbReference type="ChEBI" id="CHEBI:57743"/>
        <dbReference type="ChEBI" id="CHEBI:456215"/>
        <dbReference type="EC" id="6.3.4.5"/>
    </reaction>
</comment>
<comment type="pathway">
    <text evidence="1">Amino-acid biosynthesis; L-arginine biosynthesis; L-arginine from L-ornithine and carbamoyl phosphate: step 2/3.</text>
</comment>
<comment type="subunit">
    <text evidence="1">Homotetramer.</text>
</comment>
<comment type="subcellular location">
    <subcellularLocation>
        <location evidence="1">Cytoplasm</location>
    </subcellularLocation>
</comment>
<comment type="similarity">
    <text evidence="1">Belongs to the argininosuccinate synthase family. Type 1 subfamily.</text>
</comment>
<reference key="1">
    <citation type="journal article" date="2008" name="J. Biotechnol.">
        <title>Ultrafast pyrosequencing of Corynebacterium kroppenstedtii DSM44385 revealed insights into the physiology of a lipophilic corynebacterium that lacks mycolic acids.</title>
        <authorList>
            <person name="Tauch A."/>
            <person name="Schneider J."/>
            <person name="Szczepanowski R."/>
            <person name="Tilker A."/>
            <person name="Viehoever P."/>
            <person name="Gartemann K.-H."/>
            <person name="Arnold W."/>
            <person name="Blom J."/>
            <person name="Brinkrolf K."/>
            <person name="Brune I."/>
            <person name="Goetker S."/>
            <person name="Weisshaar B."/>
            <person name="Goesmann A."/>
            <person name="Droege M."/>
            <person name="Puehler A."/>
        </authorList>
    </citation>
    <scope>NUCLEOTIDE SEQUENCE [LARGE SCALE GENOMIC DNA]</scope>
    <source>
        <strain>DSM 44385 / JCM 11950 / CIP 105744 / CCUG 35717</strain>
    </source>
</reference>
<accession>C4LIE1</accession>
<sequence length="398" mass="43829">MTNRVVLAYSGGLDTSVAIPYLSKMTDGEVVAVSIDLGQGGEDMESVRQRALACGAVEAIVVDAKDEFAEQYCLPAIKANGLYMKQYPLVSALSRPLIVKHLVETAKEHGGTHVAHGCTGKGNDQVRFEVGFADTAPDLKIIAPARDYAWTRDKAIAFAEEIDLPIEQSASSPFSIDQNVWGRAVETGFLEDLWNPPTKDLYAYTEEPSLGNAPDEVVISFEGGKPVAIDGRPVSVLEAIEEMNRRGGAQGVGRLDMVEDRLVGIKSREVYEAPGAMVLIRAHEALEDITVERELARYKRGIDARWSEEVYDGLWFAPLKRSLDAFIDSTQENVTGDIRLVLHEGRITVNGRRSEKSLYDFNLATYDTGDTFDQTLSRGFVELHGLSSKIACKRDREQ</sequence>
<evidence type="ECO:0000255" key="1">
    <source>
        <dbReference type="HAMAP-Rule" id="MF_00005"/>
    </source>
</evidence>
<protein>
    <recommendedName>
        <fullName evidence="1">Argininosuccinate synthase</fullName>
        <ecNumber evidence="1">6.3.4.5</ecNumber>
    </recommendedName>
    <alternativeName>
        <fullName evidence="1">Citrulline--aspartate ligase</fullName>
    </alternativeName>
</protein>
<dbReference type="EC" id="6.3.4.5" evidence="1"/>
<dbReference type="EMBL" id="CP001620">
    <property type="protein sequence ID" value="ACR17596.1"/>
    <property type="molecule type" value="Genomic_DNA"/>
</dbReference>
<dbReference type="RefSeq" id="WP_012731483.1">
    <property type="nucleotide sequence ID" value="NC_012704.1"/>
</dbReference>
<dbReference type="SMR" id="C4LIE1"/>
<dbReference type="STRING" id="645127.ckrop_0842"/>
<dbReference type="KEGG" id="ckp:ckrop_0842"/>
<dbReference type="eggNOG" id="COG0137">
    <property type="taxonomic scope" value="Bacteria"/>
</dbReference>
<dbReference type="HOGENOM" id="CLU_032784_4_2_11"/>
<dbReference type="OrthoDB" id="9801641at2"/>
<dbReference type="UniPathway" id="UPA00068">
    <property type="reaction ID" value="UER00113"/>
</dbReference>
<dbReference type="Proteomes" id="UP000001473">
    <property type="component" value="Chromosome"/>
</dbReference>
<dbReference type="GO" id="GO:0005737">
    <property type="term" value="C:cytoplasm"/>
    <property type="evidence" value="ECO:0007669"/>
    <property type="project" value="UniProtKB-SubCell"/>
</dbReference>
<dbReference type="GO" id="GO:0004055">
    <property type="term" value="F:argininosuccinate synthase activity"/>
    <property type="evidence" value="ECO:0007669"/>
    <property type="project" value="UniProtKB-UniRule"/>
</dbReference>
<dbReference type="GO" id="GO:0005524">
    <property type="term" value="F:ATP binding"/>
    <property type="evidence" value="ECO:0007669"/>
    <property type="project" value="UniProtKB-UniRule"/>
</dbReference>
<dbReference type="GO" id="GO:0000053">
    <property type="term" value="P:argininosuccinate metabolic process"/>
    <property type="evidence" value="ECO:0007669"/>
    <property type="project" value="TreeGrafter"/>
</dbReference>
<dbReference type="GO" id="GO:0006526">
    <property type="term" value="P:L-arginine biosynthetic process"/>
    <property type="evidence" value="ECO:0007669"/>
    <property type="project" value="UniProtKB-UniRule"/>
</dbReference>
<dbReference type="GO" id="GO:0000050">
    <property type="term" value="P:urea cycle"/>
    <property type="evidence" value="ECO:0007669"/>
    <property type="project" value="TreeGrafter"/>
</dbReference>
<dbReference type="CDD" id="cd01999">
    <property type="entry name" value="ASS"/>
    <property type="match status" value="1"/>
</dbReference>
<dbReference type="FunFam" id="3.40.50.620:FF:000038">
    <property type="entry name" value="Argininosuccinate synthase"/>
    <property type="match status" value="1"/>
</dbReference>
<dbReference type="FunFam" id="3.90.1260.10:FF:000007">
    <property type="entry name" value="Argininosuccinate synthase"/>
    <property type="match status" value="1"/>
</dbReference>
<dbReference type="Gene3D" id="3.90.1260.10">
    <property type="entry name" value="Argininosuccinate synthetase, chain A, domain 2"/>
    <property type="match status" value="1"/>
</dbReference>
<dbReference type="Gene3D" id="3.40.50.620">
    <property type="entry name" value="HUPs"/>
    <property type="match status" value="1"/>
</dbReference>
<dbReference type="Gene3D" id="1.20.5.470">
    <property type="entry name" value="Single helix bin"/>
    <property type="match status" value="1"/>
</dbReference>
<dbReference type="HAMAP" id="MF_00005">
    <property type="entry name" value="Arg_succ_synth_type1"/>
    <property type="match status" value="1"/>
</dbReference>
<dbReference type="InterPro" id="IPR048268">
    <property type="entry name" value="Arginosuc_syn_C"/>
</dbReference>
<dbReference type="InterPro" id="IPR048267">
    <property type="entry name" value="Arginosuc_syn_N"/>
</dbReference>
<dbReference type="InterPro" id="IPR001518">
    <property type="entry name" value="Arginosuc_synth"/>
</dbReference>
<dbReference type="InterPro" id="IPR018223">
    <property type="entry name" value="Arginosuc_synth_CS"/>
</dbReference>
<dbReference type="InterPro" id="IPR023434">
    <property type="entry name" value="Arginosuc_synth_type_1_subfam"/>
</dbReference>
<dbReference type="InterPro" id="IPR024074">
    <property type="entry name" value="AS_cat/multimer_dom_body"/>
</dbReference>
<dbReference type="InterPro" id="IPR014729">
    <property type="entry name" value="Rossmann-like_a/b/a_fold"/>
</dbReference>
<dbReference type="NCBIfam" id="TIGR00032">
    <property type="entry name" value="argG"/>
    <property type="match status" value="1"/>
</dbReference>
<dbReference type="NCBIfam" id="NF001770">
    <property type="entry name" value="PRK00509.1"/>
    <property type="match status" value="1"/>
</dbReference>
<dbReference type="PANTHER" id="PTHR11587">
    <property type="entry name" value="ARGININOSUCCINATE SYNTHASE"/>
    <property type="match status" value="1"/>
</dbReference>
<dbReference type="PANTHER" id="PTHR11587:SF2">
    <property type="entry name" value="ARGININOSUCCINATE SYNTHASE"/>
    <property type="match status" value="1"/>
</dbReference>
<dbReference type="Pfam" id="PF20979">
    <property type="entry name" value="Arginosuc_syn_C"/>
    <property type="match status" value="1"/>
</dbReference>
<dbReference type="Pfam" id="PF00764">
    <property type="entry name" value="Arginosuc_synth"/>
    <property type="match status" value="1"/>
</dbReference>
<dbReference type="SUPFAM" id="SSF52402">
    <property type="entry name" value="Adenine nucleotide alpha hydrolases-like"/>
    <property type="match status" value="1"/>
</dbReference>
<dbReference type="SUPFAM" id="SSF69864">
    <property type="entry name" value="Argininosuccinate synthetase, C-terminal domain"/>
    <property type="match status" value="1"/>
</dbReference>
<dbReference type="PROSITE" id="PS00564">
    <property type="entry name" value="ARGININOSUCCIN_SYN_1"/>
    <property type="match status" value="1"/>
</dbReference>
<dbReference type="PROSITE" id="PS00565">
    <property type="entry name" value="ARGININOSUCCIN_SYN_2"/>
    <property type="match status" value="1"/>
</dbReference>
<name>ASSY_CORK4</name>